<proteinExistence type="inferred from homology"/>
<gene>
    <name type="primary">recX</name>
    <name type="ordered locus">CT1778</name>
</gene>
<reference key="1">
    <citation type="journal article" date="2002" name="Proc. Natl. Acad. Sci. U.S.A.">
        <title>The complete genome sequence of Chlorobium tepidum TLS, a photosynthetic, anaerobic, green-sulfur bacterium.</title>
        <authorList>
            <person name="Eisen J.A."/>
            <person name="Nelson K.E."/>
            <person name="Paulsen I.T."/>
            <person name="Heidelberg J.F."/>
            <person name="Wu M."/>
            <person name="Dodson R.J."/>
            <person name="DeBoy R.T."/>
            <person name="Gwinn M.L."/>
            <person name="Nelson W.C."/>
            <person name="Haft D.H."/>
            <person name="Hickey E.K."/>
            <person name="Peterson J.D."/>
            <person name="Durkin A.S."/>
            <person name="Kolonay J.F."/>
            <person name="Yang F."/>
            <person name="Holt I.E."/>
            <person name="Umayam L.A."/>
            <person name="Mason T.M."/>
            <person name="Brenner M."/>
            <person name="Shea T.P."/>
            <person name="Parksey D.S."/>
            <person name="Nierman W.C."/>
            <person name="Feldblyum T.V."/>
            <person name="Hansen C.L."/>
            <person name="Craven M.B."/>
            <person name="Radune D."/>
            <person name="Vamathevan J.J."/>
            <person name="Khouri H.M."/>
            <person name="White O."/>
            <person name="Gruber T.M."/>
            <person name="Ketchum K.A."/>
            <person name="Venter J.C."/>
            <person name="Tettelin H."/>
            <person name="Bryant D.A."/>
            <person name="Fraser C.M."/>
        </authorList>
    </citation>
    <scope>NUCLEOTIDE SEQUENCE [LARGE SCALE GENOMIC DNA]</scope>
    <source>
        <strain>ATCC 49652 / DSM 12025 / NBRC 103806 / TLS</strain>
    </source>
</reference>
<accession>Q8KBK8</accession>
<organism>
    <name type="scientific">Chlorobaculum tepidum (strain ATCC 49652 / DSM 12025 / NBRC 103806 / TLS)</name>
    <name type="common">Chlorobium tepidum</name>
    <dbReference type="NCBI Taxonomy" id="194439"/>
    <lineage>
        <taxon>Bacteria</taxon>
        <taxon>Pseudomonadati</taxon>
        <taxon>Chlorobiota</taxon>
        <taxon>Chlorobiia</taxon>
        <taxon>Chlorobiales</taxon>
        <taxon>Chlorobiaceae</taxon>
        <taxon>Chlorobaculum</taxon>
    </lineage>
</organism>
<protein>
    <recommendedName>
        <fullName>Regulatory protein RecX</fullName>
    </recommendedName>
</protein>
<comment type="function">
    <text evidence="1">Modulates RecA activity.</text>
</comment>
<comment type="subcellular location">
    <subcellularLocation>
        <location evidence="2">Cytoplasm</location>
    </subcellularLocation>
</comment>
<comment type="similarity">
    <text evidence="2">Belongs to the RecX family.</text>
</comment>
<feature type="chain" id="PRO_0000162421" description="Regulatory protein RecX">
    <location>
        <begin position="1"/>
        <end position="160"/>
    </location>
</feature>
<keyword id="KW-0963">Cytoplasm</keyword>
<keyword id="KW-1185">Reference proteome</keyword>
<dbReference type="EMBL" id="AE006470">
    <property type="protein sequence ID" value="AAM72999.1"/>
    <property type="molecule type" value="Genomic_DNA"/>
</dbReference>
<dbReference type="RefSeq" id="NP_662657.1">
    <property type="nucleotide sequence ID" value="NC_002932.3"/>
</dbReference>
<dbReference type="RefSeq" id="WP_010933438.1">
    <property type="nucleotide sequence ID" value="NC_002932.3"/>
</dbReference>
<dbReference type="SMR" id="Q8KBK8"/>
<dbReference type="STRING" id="194439.CT1778"/>
<dbReference type="EnsemblBacteria" id="AAM72999">
    <property type="protein sequence ID" value="AAM72999"/>
    <property type="gene ID" value="CT1778"/>
</dbReference>
<dbReference type="KEGG" id="cte:CT1778"/>
<dbReference type="eggNOG" id="COG2137">
    <property type="taxonomic scope" value="Bacteria"/>
</dbReference>
<dbReference type="HOGENOM" id="CLU_066607_3_3_10"/>
<dbReference type="OrthoDB" id="597927at2"/>
<dbReference type="Proteomes" id="UP000001007">
    <property type="component" value="Chromosome"/>
</dbReference>
<dbReference type="GO" id="GO:0005737">
    <property type="term" value="C:cytoplasm"/>
    <property type="evidence" value="ECO:0007669"/>
    <property type="project" value="UniProtKB-SubCell"/>
</dbReference>
<dbReference type="GO" id="GO:0006282">
    <property type="term" value="P:regulation of DNA repair"/>
    <property type="evidence" value="ECO:0007669"/>
    <property type="project" value="UniProtKB-UniRule"/>
</dbReference>
<dbReference type="Gene3D" id="1.10.10.10">
    <property type="entry name" value="Winged helix-like DNA-binding domain superfamily/Winged helix DNA-binding domain"/>
    <property type="match status" value="3"/>
</dbReference>
<dbReference type="HAMAP" id="MF_01114">
    <property type="entry name" value="RecX"/>
    <property type="match status" value="1"/>
</dbReference>
<dbReference type="InterPro" id="IPR053926">
    <property type="entry name" value="RecX_HTH_1st"/>
</dbReference>
<dbReference type="InterPro" id="IPR053924">
    <property type="entry name" value="RecX_HTH_2nd"/>
</dbReference>
<dbReference type="InterPro" id="IPR053925">
    <property type="entry name" value="RecX_HTH_3rd"/>
</dbReference>
<dbReference type="InterPro" id="IPR003783">
    <property type="entry name" value="Regulatory_RecX"/>
</dbReference>
<dbReference type="InterPro" id="IPR036388">
    <property type="entry name" value="WH-like_DNA-bd_sf"/>
</dbReference>
<dbReference type="NCBIfam" id="NF001063">
    <property type="entry name" value="PRK00117.5-3"/>
    <property type="match status" value="1"/>
</dbReference>
<dbReference type="PANTHER" id="PTHR33602">
    <property type="entry name" value="REGULATORY PROTEIN RECX FAMILY PROTEIN"/>
    <property type="match status" value="1"/>
</dbReference>
<dbReference type="PANTHER" id="PTHR33602:SF1">
    <property type="entry name" value="REGULATORY PROTEIN RECX FAMILY PROTEIN"/>
    <property type="match status" value="1"/>
</dbReference>
<dbReference type="Pfam" id="PF21982">
    <property type="entry name" value="RecX_HTH1"/>
    <property type="match status" value="1"/>
</dbReference>
<dbReference type="Pfam" id="PF02631">
    <property type="entry name" value="RecX_HTH2"/>
    <property type="match status" value="1"/>
</dbReference>
<dbReference type="Pfam" id="PF21981">
    <property type="entry name" value="RecX_HTH3"/>
    <property type="match status" value="1"/>
</dbReference>
<evidence type="ECO:0000250" key="1"/>
<evidence type="ECO:0000305" key="2"/>
<name>RECX_CHLTE</name>
<sequence length="160" mass="17890">MDEGKKSSALDHALRLLAGRAHGRAELESKLKKKGFDSESIAKALARLDELNLTDDRAFAQSCTASMARRKPEGRLKTRARLKQKGLPDNIIDEALNGCDQTELCRSAAEKKLRTLPASPDQKKKKLITFLKNRGFDWETIRETVKLVLGEESARSDQLD</sequence>